<organism>
    <name type="scientific">Chaetosphaeridium globosum</name>
    <name type="common">Charophycean green alga</name>
    <name type="synonym">Herposteiron globosum</name>
    <dbReference type="NCBI Taxonomy" id="96477"/>
    <lineage>
        <taxon>Eukaryota</taxon>
        <taxon>Viridiplantae</taxon>
        <taxon>Streptophyta</taxon>
        <taxon>Coleochaetophyceae</taxon>
        <taxon>Coleochaetales</taxon>
        <taxon>Chaetosphaeridiaceae</taxon>
        <taxon>Chaetosphaeridium</taxon>
    </lineage>
</organism>
<keyword id="KW-0150">Chloroplast</keyword>
<keyword id="KW-0472">Membrane</keyword>
<keyword id="KW-0602">Photosynthesis</keyword>
<keyword id="KW-0604">Photosystem II</keyword>
<keyword id="KW-0934">Plastid</keyword>
<keyword id="KW-0674">Reaction center</keyword>
<keyword id="KW-0793">Thylakoid</keyword>
<keyword id="KW-0812">Transmembrane</keyword>
<keyword id="KW-1133">Transmembrane helix</keyword>
<name>PSBZ_CHAGL</name>
<proteinExistence type="inferred from homology"/>
<dbReference type="EMBL" id="AF494278">
    <property type="protein sequence ID" value="AAM96552.1"/>
    <property type="molecule type" value="Genomic_DNA"/>
</dbReference>
<dbReference type="RefSeq" id="NP_683823.1">
    <property type="nucleotide sequence ID" value="NC_004115.1"/>
</dbReference>
<dbReference type="SMR" id="Q8M9W6"/>
<dbReference type="GeneID" id="860708"/>
<dbReference type="GO" id="GO:0009535">
    <property type="term" value="C:chloroplast thylakoid membrane"/>
    <property type="evidence" value="ECO:0007669"/>
    <property type="project" value="UniProtKB-SubCell"/>
</dbReference>
<dbReference type="GO" id="GO:0009539">
    <property type="term" value="C:photosystem II reaction center"/>
    <property type="evidence" value="ECO:0007669"/>
    <property type="project" value="InterPro"/>
</dbReference>
<dbReference type="GO" id="GO:0015979">
    <property type="term" value="P:photosynthesis"/>
    <property type="evidence" value="ECO:0007669"/>
    <property type="project" value="UniProtKB-UniRule"/>
</dbReference>
<dbReference type="GO" id="GO:0042549">
    <property type="term" value="P:photosystem II stabilization"/>
    <property type="evidence" value="ECO:0007669"/>
    <property type="project" value="InterPro"/>
</dbReference>
<dbReference type="Gene3D" id="1.10.287.740">
    <property type="entry name" value="Photosystem II PsbZ, reaction centre"/>
    <property type="match status" value="1"/>
</dbReference>
<dbReference type="HAMAP" id="MF_00644">
    <property type="entry name" value="PSII_PsbZ"/>
    <property type="match status" value="1"/>
</dbReference>
<dbReference type="InterPro" id="IPR002644">
    <property type="entry name" value="PSII_PsbZ"/>
</dbReference>
<dbReference type="InterPro" id="IPR036512">
    <property type="entry name" value="PSII_PsbZ_sf"/>
</dbReference>
<dbReference type="NCBIfam" id="TIGR03043">
    <property type="entry name" value="PS_II_psbZ"/>
    <property type="match status" value="1"/>
</dbReference>
<dbReference type="PANTHER" id="PTHR34971">
    <property type="entry name" value="PHOTOSYSTEM II REACTION CENTER PROTEIN Z"/>
    <property type="match status" value="1"/>
</dbReference>
<dbReference type="PANTHER" id="PTHR34971:SF2">
    <property type="entry name" value="PHOTOSYSTEM II REACTION CENTER PROTEIN Z"/>
    <property type="match status" value="1"/>
</dbReference>
<dbReference type="Pfam" id="PF01737">
    <property type="entry name" value="Ycf9"/>
    <property type="match status" value="1"/>
</dbReference>
<dbReference type="SUPFAM" id="SSF161055">
    <property type="entry name" value="PsbZ-like"/>
    <property type="match status" value="1"/>
</dbReference>
<geneLocation type="chloroplast"/>
<evidence type="ECO:0000255" key="1">
    <source>
        <dbReference type="HAMAP-Rule" id="MF_00644"/>
    </source>
</evidence>
<gene>
    <name evidence="1" type="primary">psbZ</name>
</gene>
<comment type="function">
    <text evidence="1">May control the interaction of photosystem II (PSII) cores with the light-harvesting antenna, regulates electron flow through the 2 photosystem reaction centers. PSII is a light-driven water plastoquinone oxidoreductase, using light energy to abstract electrons from H(2)O, generating a proton gradient subsequently used for ATP formation.</text>
</comment>
<comment type="subunit">
    <text evidence="1">PSII is composed of 1 copy each of membrane proteins PsbA, PsbB, PsbC, PsbD, PsbE, PsbF, PsbH, PsbI, PsbJ, PsbK, PsbL, PsbM, PsbT, PsbY, PsbZ, Psb30/Ycf12, at least 3 peripheral proteins of the oxygen-evolving complex and a large number of cofactors. It forms dimeric complexes.</text>
</comment>
<comment type="subcellular location">
    <subcellularLocation>
        <location evidence="1">Plastid</location>
        <location evidence="1">Chloroplast thylakoid membrane</location>
        <topology evidence="1">Multi-pass membrane protein</topology>
    </subcellularLocation>
</comment>
<comment type="similarity">
    <text evidence="1">Belongs to the PsbZ family.</text>
</comment>
<sequence>MILAFQLSVFALVAISFLLVVGVPVVLASPDGWSTSKNAVFSGASLWIALVFLVGVLNSFIS</sequence>
<protein>
    <recommendedName>
        <fullName evidence="1">Photosystem II reaction center protein Z</fullName>
        <shortName evidence="1">PSII-Z</shortName>
    </recommendedName>
</protein>
<feature type="chain" id="PRO_0000217692" description="Photosystem II reaction center protein Z">
    <location>
        <begin position="1"/>
        <end position="62"/>
    </location>
</feature>
<feature type="transmembrane region" description="Helical" evidence="1">
    <location>
        <begin position="8"/>
        <end position="28"/>
    </location>
</feature>
<feature type="transmembrane region" description="Helical" evidence="1">
    <location>
        <begin position="41"/>
        <end position="61"/>
    </location>
</feature>
<reference key="1">
    <citation type="journal article" date="2002" name="Proc. Natl. Acad. Sci. U.S.A.">
        <title>The chloroplast and mitochondrial genome sequences of the charophyte Chaetosphaeridium globosum: insights into the timing of the events that restructured organelle DNAs within the green algal lineage that led to land plants.</title>
        <authorList>
            <person name="Turmel M."/>
            <person name="Otis C."/>
            <person name="Lemieux C."/>
        </authorList>
    </citation>
    <scope>NUCLEOTIDE SEQUENCE [LARGE SCALE GENOMIC DNA]</scope>
    <source>
        <strain>M1311</strain>
    </source>
</reference>
<accession>Q8M9W6</accession>